<organism>
    <name type="scientific">Acinetobacter baumannii (strain AYE)</name>
    <dbReference type="NCBI Taxonomy" id="509173"/>
    <lineage>
        <taxon>Bacteria</taxon>
        <taxon>Pseudomonadati</taxon>
        <taxon>Pseudomonadota</taxon>
        <taxon>Gammaproteobacteria</taxon>
        <taxon>Moraxellales</taxon>
        <taxon>Moraxellaceae</taxon>
        <taxon>Acinetobacter</taxon>
        <taxon>Acinetobacter calcoaceticus/baumannii complex</taxon>
    </lineage>
</organism>
<gene>
    <name evidence="1" type="primary">glmU</name>
    <name type="ordered locus">ABAYE0090</name>
</gene>
<keyword id="KW-0012">Acyltransferase</keyword>
<keyword id="KW-0133">Cell shape</keyword>
<keyword id="KW-0961">Cell wall biogenesis/degradation</keyword>
<keyword id="KW-0963">Cytoplasm</keyword>
<keyword id="KW-0460">Magnesium</keyword>
<keyword id="KW-0479">Metal-binding</keyword>
<keyword id="KW-0511">Multifunctional enzyme</keyword>
<keyword id="KW-0548">Nucleotidyltransferase</keyword>
<keyword id="KW-0573">Peptidoglycan synthesis</keyword>
<keyword id="KW-0677">Repeat</keyword>
<keyword id="KW-0808">Transferase</keyword>
<sequence>MSTTVIILAAGKGTRMRSQLPKVLQPLAGRPLLGHVIKTAKQLLAENIITIYGHGGDHVKKTFAQENIQWVEQAEQLGTGHAVQMTLPVLPKDGISLILYGDVPLVRQTTLEQLIEVSNKTGIGMITLHVDNPTGYGRIVRQDGKIQAIVEHKDATEAQRQIQEINTGIYCVSNAKLHEWLPKLSNENAQGEYYLTDIVAMAVADGLEIASIQPELAFEVEGVNDRLQLAALEREFQKQQAKELMQQGVTFADPARFDLRGTVKVGHDVRIDVNVIIEGNCELGDFVEIGAGCILKNTTIAAGTKVQAYSVFDGAVVGENTQIGPFARLRPGAKLANEVHIGNFVEVKNTTIGLGSKANHFTYLGDAEIGAESNIGAGTITCNYDGANKHKTTIGDAVFIGSNSSLVAPVTIGNGATVGAGSVITKDVAEQSLSFERAQQISKANYQRPQKLKK</sequence>
<name>GLMU_ACIBY</name>
<evidence type="ECO:0000255" key="1">
    <source>
        <dbReference type="HAMAP-Rule" id="MF_01631"/>
    </source>
</evidence>
<reference key="1">
    <citation type="journal article" date="2008" name="PLoS ONE">
        <title>Comparative analysis of Acinetobacters: three genomes for three lifestyles.</title>
        <authorList>
            <person name="Vallenet D."/>
            <person name="Nordmann P."/>
            <person name="Barbe V."/>
            <person name="Poirel L."/>
            <person name="Mangenot S."/>
            <person name="Bataille E."/>
            <person name="Dossat C."/>
            <person name="Gas S."/>
            <person name="Kreimeyer A."/>
            <person name="Lenoble P."/>
            <person name="Oztas S."/>
            <person name="Poulain J."/>
            <person name="Segurens B."/>
            <person name="Robert C."/>
            <person name="Abergel C."/>
            <person name="Claverie J.-M."/>
            <person name="Raoult D."/>
            <person name="Medigue C."/>
            <person name="Weissenbach J."/>
            <person name="Cruveiller S."/>
        </authorList>
    </citation>
    <scope>NUCLEOTIDE SEQUENCE [LARGE SCALE GENOMIC DNA]</scope>
    <source>
        <strain>AYE</strain>
    </source>
</reference>
<dbReference type="EC" id="2.7.7.23" evidence="1"/>
<dbReference type="EC" id="2.3.1.157" evidence="1"/>
<dbReference type="EMBL" id="CU459141">
    <property type="protein sequence ID" value="CAM85078.1"/>
    <property type="molecule type" value="Genomic_DNA"/>
</dbReference>
<dbReference type="RefSeq" id="WP_000108585.1">
    <property type="nucleotide sequence ID" value="NZ_JBDGFB010000004.1"/>
</dbReference>
<dbReference type="SMR" id="B0V9X1"/>
<dbReference type="EnsemblBacteria" id="CAM85078">
    <property type="protein sequence ID" value="CAM85078"/>
    <property type="gene ID" value="ABAYE0090"/>
</dbReference>
<dbReference type="KEGG" id="aby:ABAYE0090"/>
<dbReference type="HOGENOM" id="CLU_029499_15_2_6"/>
<dbReference type="UniPathway" id="UPA00113">
    <property type="reaction ID" value="UER00532"/>
</dbReference>
<dbReference type="UniPathway" id="UPA00113">
    <property type="reaction ID" value="UER00533"/>
</dbReference>
<dbReference type="UniPathway" id="UPA00973"/>
<dbReference type="GO" id="GO:0005737">
    <property type="term" value="C:cytoplasm"/>
    <property type="evidence" value="ECO:0007669"/>
    <property type="project" value="UniProtKB-SubCell"/>
</dbReference>
<dbReference type="GO" id="GO:0016020">
    <property type="term" value="C:membrane"/>
    <property type="evidence" value="ECO:0007669"/>
    <property type="project" value="GOC"/>
</dbReference>
<dbReference type="GO" id="GO:0019134">
    <property type="term" value="F:glucosamine-1-phosphate N-acetyltransferase activity"/>
    <property type="evidence" value="ECO:0007669"/>
    <property type="project" value="UniProtKB-UniRule"/>
</dbReference>
<dbReference type="GO" id="GO:0000287">
    <property type="term" value="F:magnesium ion binding"/>
    <property type="evidence" value="ECO:0007669"/>
    <property type="project" value="UniProtKB-UniRule"/>
</dbReference>
<dbReference type="GO" id="GO:0003977">
    <property type="term" value="F:UDP-N-acetylglucosamine diphosphorylase activity"/>
    <property type="evidence" value="ECO:0007669"/>
    <property type="project" value="UniProtKB-UniRule"/>
</dbReference>
<dbReference type="GO" id="GO:0000902">
    <property type="term" value="P:cell morphogenesis"/>
    <property type="evidence" value="ECO:0007669"/>
    <property type="project" value="UniProtKB-UniRule"/>
</dbReference>
<dbReference type="GO" id="GO:0071555">
    <property type="term" value="P:cell wall organization"/>
    <property type="evidence" value="ECO:0007669"/>
    <property type="project" value="UniProtKB-KW"/>
</dbReference>
<dbReference type="GO" id="GO:0009245">
    <property type="term" value="P:lipid A biosynthetic process"/>
    <property type="evidence" value="ECO:0007669"/>
    <property type="project" value="UniProtKB-UniRule"/>
</dbReference>
<dbReference type="GO" id="GO:0009252">
    <property type="term" value="P:peptidoglycan biosynthetic process"/>
    <property type="evidence" value="ECO:0007669"/>
    <property type="project" value="UniProtKB-UniRule"/>
</dbReference>
<dbReference type="GO" id="GO:0008360">
    <property type="term" value="P:regulation of cell shape"/>
    <property type="evidence" value="ECO:0007669"/>
    <property type="project" value="UniProtKB-KW"/>
</dbReference>
<dbReference type="GO" id="GO:0006048">
    <property type="term" value="P:UDP-N-acetylglucosamine biosynthetic process"/>
    <property type="evidence" value="ECO:0007669"/>
    <property type="project" value="UniProtKB-UniPathway"/>
</dbReference>
<dbReference type="CDD" id="cd02540">
    <property type="entry name" value="GT2_GlmU_N_bac"/>
    <property type="match status" value="1"/>
</dbReference>
<dbReference type="CDD" id="cd03353">
    <property type="entry name" value="LbH_GlmU_C"/>
    <property type="match status" value="1"/>
</dbReference>
<dbReference type="Gene3D" id="2.160.10.10">
    <property type="entry name" value="Hexapeptide repeat proteins"/>
    <property type="match status" value="1"/>
</dbReference>
<dbReference type="Gene3D" id="3.90.550.10">
    <property type="entry name" value="Spore Coat Polysaccharide Biosynthesis Protein SpsA, Chain A"/>
    <property type="match status" value="1"/>
</dbReference>
<dbReference type="HAMAP" id="MF_01631">
    <property type="entry name" value="GlmU"/>
    <property type="match status" value="1"/>
</dbReference>
<dbReference type="InterPro" id="IPR005882">
    <property type="entry name" value="Bifunctional_GlmU"/>
</dbReference>
<dbReference type="InterPro" id="IPR050065">
    <property type="entry name" value="GlmU-like"/>
</dbReference>
<dbReference type="InterPro" id="IPR038009">
    <property type="entry name" value="GlmU_C_LbH"/>
</dbReference>
<dbReference type="InterPro" id="IPR001451">
    <property type="entry name" value="Hexapep"/>
</dbReference>
<dbReference type="InterPro" id="IPR018357">
    <property type="entry name" value="Hexapep_transf_CS"/>
</dbReference>
<dbReference type="InterPro" id="IPR025877">
    <property type="entry name" value="MobA-like_NTP_Trfase"/>
</dbReference>
<dbReference type="InterPro" id="IPR029044">
    <property type="entry name" value="Nucleotide-diphossugar_trans"/>
</dbReference>
<dbReference type="InterPro" id="IPR011004">
    <property type="entry name" value="Trimer_LpxA-like_sf"/>
</dbReference>
<dbReference type="NCBIfam" id="TIGR01173">
    <property type="entry name" value="glmU"/>
    <property type="match status" value="1"/>
</dbReference>
<dbReference type="NCBIfam" id="NF010933">
    <property type="entry name" value="PRK14353.1"/>
    <property type="match status" value="1"/>
</dbReference>
<dbReference type="PANTHER" id="PTHR43584:SF3">
    <property type="entry name" value="BIFUNCTIONAL PROTEIN GLMU"/>
    <property type="match status" value="1"/>
</dbReference>
<dbReference type="PANTHER" id="PTHR43584">
    <property type="entry name" value="NUCLEOTIDYL TRANSFERASE"/>
    <property type="match status" value="1"/>
</dbReference>
<dbReference type="Pfam" id="PF00132">
    <property type="entry name" value="Hexapep"/>
    <property type="match status" value="2"/>
</dbReference>
<dbReference type="Pfam" id="PF12804">
    <property type="entry name" value="NTP_transf_3"/>
    <property type="match status" value="1"/>
</dbReference>
<dbReference type="SUPFAM" id="SSF53448">
    <property type="entry name" value="Nucleotide-diphospho-sugar transferases"/>
    <property type="match status" value="1"/>
</dbReference>
<dbReference type="SUPFAM" id="SSF51161">
    <property type="entry name" value="Trimeric LpxA-like enzymes"/>
    <property type="match status" value="1"/>
</dbReference>
<dbReference type="PROSITE" id="PS00101">
    <property type="entry name" value="HEXAPEP_TRANSFERASES"/>
    <property type="match status" value="1"/>
</dbReference>
<feature type="chain" id="PRO_1000186383" description="Bifunctional protein GlmU">
    <location>
        <begin position="1"/>
        <end position="454"/>
    </location>
</feature>
<feature type="region of interest" description="Pyrophosphorylase" evidence="1">
    <location>
        <begin position="1"/>
        <end position="226"/>
    </location>
</feature>
<feature type="region of interest" description="Linker" evidence="1">
    <location>
        <begin position="227"/>
        <end position="247"/>
    </location>
</feature>
<feature type="region of interest" description="N-acetyltransferase" evidence="1">
    <location>
        <begin position="248"/>
        <end position="454"/>
    </location>
</feature>
<feature type="active site" description="Proton acceptor" evidence="1">
    <location>
        <position position="360"/>
    </location>
</feature>
<feature type="binding site" evidence="1">
    <location>
        <begin position="8"/>
        <end position="11"/>
    </location>
    <ligand>
        <name>UDP-N-acetyl-alpha-D-glucosamine</name>
        <dbReference type="ChEBI" id="CHEBI:57705"/>
    </ligand>
</feature>
<feature type="binding site" evidence="1">
    <location>
        <position position="22"/>
    </location>
    <ligand>
        <name>UDP-N-acetyl-alpha-D-glucosamine</name>
        <dbReference type="ChEBI" id="CHEBI:57705"/>
    </ligand>
</feature>
<feature type="binding site" evidence="1">
    <location>
        <position position="73"/>
    </location>
    <ligand>
        <name>UDP-N-acetyl-alpha-D-glucosamine</name>
        <dbReference type="ChEBI" id="CHEBI:57705"/>
    </ligand>
</feature>
<feature type="binding site" evidence="1">
    <location>
        <begin position="78"/>
        <end position="79"/>
    </location>
    <ligand>
        <name>UDP-N-acetyl-alpha-D-glucosamine</name>
        <dbReference type="ChEBI" id="CHEBI:57705"/>
    </ligand>
</feature>
<feature type="binding site" evidence="1">
    <location>
        <begin position="100"/>
        <end position="102"/>
    </location>
    <ligand>
        <name>UDP-N-acetyl-alpha-D-glucosamine</name>
        <dbReference type="ChEBI" id="CHEBI:57705"/>
    </ligand>
</feature>
<feature type="binding site" evidence="1">
    <location>
        <position position="102"/>
    </location>
    <ligand>
        <name>Mg(2+)</name>
        <dbReference type="ChEBI" id="CHEBI:18420"/>
    </ligand>
</feature>
<feature type="binding site" evidence="1">
    <location>
        <position position="137"/>
    </location>
    <ligand>
        <name>UDP-N-acetyl-alpha-D-glucosamine</name>
        <dbReference type="ChEBI" id="CHEBI:57705"/>
    </ligand>
</feature>
<feature type="binding site" evidence="1">
    <location>
        <position position="151"/>
    </location>
    <ligand>
        <name>UDP-N-acetyl-alpha-D-glucosamine</name>
        <dbReference type="ChEBI" id="CHEBI:57705"/>
    </ligand>
</feature>
<feature type="binding site" evidence="1">
    <location>
        <position position="166"/>
    </location>
    <ligand>
        <name>UDP-N-acetyl-alpha-D-glucosamine</name>
        <dbReference type="ChEBI" id="CHEBI:57705"/>
    </ligand>
</feature>
<feature type="binding site" evidence="1">
    <location>
        <position position="224"/>
    </location>
    <ligand>
        <name>Mg(2+)</name>
        <dbReference type="ChEBI" id="CHEBI:18420"/>
    </ligand>
</feature>
<feature type="binding site" evidence="1">
    <location>
        <position position="224"/>
    </location>
    <ligand>
        <name>UDP-N-acetyl-alpha-D-glucosamine</name>
        <dbReference type="ChEBI" id="CHEBI:57705"/>
    </ligand>
</feature>
<feature type="binding site" evidence="1">
    <location>
        <position position="330"/>
    </location>
    <ligand>
        <name>UDP-N-acetyl-alpha-D-glucosamine</name>
        <dbReference type="ChEBI" id="CHEBI:57705"/>
    </ligand>
</feature>
<feature type="binding site" evidence="1">
    <location>
        <position position="348"/>
    </location>
    <ligand>
        <name>UDP-N-acetyl-alpha-D-glucosamine</name>
        <dbReference type="ChEBI" id="CHEBI:57705"/>
    </ligand>
</feature>
<feature type="binding site" evidence="1">
    <location>
        <position position="363"/>
    </location>
    <ligand>
        <name>UDP-N-acetyl-alpha-D-glucosamine</name>
        <dbReference type="ChEBI" id="CHEBI:57705"/>
    </ligand>
</feature>
<feature type="binding site" evidence="1">
    <location>
        <position position="374"/>
    </location>
    <ligand>
        <name>UDP-N-acetyl-alpha-D-glucosamine</name>
        <dbReference type="ChEBI" id="CHEBI:57705"/>
    </ligand>
</feature>
<feature type="binding site" evidence="1">
    <location>
        <position position="377"/>
    </location>
    <ligand>
        <name>acetyl-CoA</name>
        <dbReference type="ChEBI" id="CHEBI:57288"/>
    </ligand>
</feature>
<feature type="binding site" evidence="1">
    <location>
        <begin position="383"/>
        <end position="384"/>
    </location>
    <ligand>
        <name>acetyl-CoA</name>
        <dbReference type="ChEBI" id="CHEBI:57288"/>
    </ligand>
</feature>
<feature type="binding site" evidence="1">
    <location>
        <position position="402"/>
    </location>
    <ligand>
        <name>acetyl-CoA</name>
        <dbReference type="ChEBI" id="CHEBI:57288"/>
    </ligand>
</feature>
<feature type="binding site" evidence="1">
    <location>
        <position position="420"/>
    </location>
    <ligand>
        <name>acetyl-CoA</name>
        <dbReference type="ChEBI" id="CHEBI:57288"/>
    </ligand>
</feature>
<feature type="binding site" evidence="1">
    <location>
        <position position="437"/>
    </location>
    <ligand>
        <name>acetyl-CoA</name>
        <dbReference type="ChEBI" id="CHEBI:57288"/>
    </ligand>
</feature>
<comment type="function">
    <text evidence="1">Catalyzes the last two sequential reactions in the de novo biosynthetic pathway for UDP-N-acetylglucosamine (UDP-GlcNAc). The C-terminal domain catalyzes the transfer of acetyl group from acetyl coenzyme A to glucosamine-1-phosphate (GlcN-1-P) to produce N-acetylglucosamine-1-phosphate (GlcNAc-1-P), which is converted into UDP-GlcNAc by the transfer of uridine 5-monophosphate (from uridine 5-triphosphate), a reaction catalyzed by the N-terminal domain.</text>
</comment>
<comment type="catalytic activity">
    <reaction evidence="1">
        <text>alpha-D-glucosamine 1-phosphate + acetyl-CoA = N-acetyl-alpha-D-glucosamine 1-phosphate + CoA + H(+)</text>
        <dbReference type="Rhea" id="RHEA:13725"/>
        <dbReference type="ChEBI" id="CHEBI:15378"/>
        <dbReference type="ChEBI" id="CHEBI:57287"/>
        <dbReference type="ChEBI" id="CHEBI:57288"/>
        <dbReference type="ChEBI" id="CHEBI:57776"/>
        <dbReference type="ChEBI" id="CHEBI:58516"/>
        <dbReference type="EC" id="2.3.1.157"/>
    </reaction>
</comment>
<comment type="catalytic activity">
    <reaction evidence="1">
        <text>N-acetyl-alpha-D-glucosamine 1-phosphate + UTP + H(+) = UDP-N-acetyl-alpha-D-glucosamine + diphosphate</text>
        <dbReference type="Rhea" id="RHEA:13509"/>
        <dbReference type="ChEBI" id="CHEBI:15378"/>
        <dbReference type="ChEBI" id="CHEBI:33019"/>
        <dbReference type="ChEBI" id="CHEBI:46398"/>
        <dbReference type="ChEBI" id="CHEBI:57705"/>
        <dbReference type="ChEBI" id="CHEBI:57776"/>
        <dbReference type="EC" id="2.7.7.23"/>
    </reaction>
</comment>
<comment type="cofactor">
    <cofactor evidence="1">
        <name>Mg(2+)</name>
        <dbReference type="ChEBI" id="CHEBI:18420"/>
    </cofactor>
    <text evidence="1">Binds 1 Mg(2+) ion per subunit.</text>
</comment>
<comment type="pathway">
    <text evidence="1">Nucleotide-sugar biosynthesis; UDP-N-acetyl-alpha-D-glucosamine biosynthesis; N-acetyl-alpha-D-glucosamine 1-phosphate from alpha-D-glucosamine 6-phosphate (route II): step 2/2.</text>
</comment>
<comment type="pathway">
    <text evidence="1">Nucleotide-sugar biosynthesis; UDP-N-acetyl-alpha-D-glucosamine biosynthesis; UDP-N-acetyl-alpha-D-glucosamine from N-acetyl-alpha-D-glucosamine 1-phosphate: step 1/1.</text>
</comment>
<comment type="pathway">
    <text evidence="1">Bacterial outer membrane biogenesis; LPS lipid A biosynthesis.</text>
</comment>
<comment type="subunit">
    <text evidence="1">Homotrimer.</text>
</comment>
<comment type="subcellular location">
    <subcellularLocation>
        <location evidence="1">Cytoplasm</location>
    </subcellularLocation>
</comment>
<comment type="similarity">
    <text evidence="1">In the N-terminal section; belongs to the N-acetylglucosamine-1-phosphate uridyltransferase family.</text>
</comment>
<comment type="similarity">
    <text evidence="1">In the C-terminal section; belongs to the transferase hexapeptide repeat family.</text>
</comment>
<proteinExistence type="inferred from homology"/>
<protein>
    <recommendedName>
        <fullName evidence="1">Bifunctional protein GlmU</fullName>
    </recommendedName>
    <domain>
        <recommendedName>
            <fullName evidence="1">UDP-N-acetylglucosamine pyrophosphorylase</fullName>
            <ecNumber evidence="1">2.7.7.23</ecNumber>
        </recommendedName>
        <alternativeName>
            <fullName evidence="1">N-acetylglucosamine-1-phosphate uridyltransferase</fullName>
        </alternativeName>
    </domain>
    <domain>
        <recommendedName>
            <fullName evidence="1">Glucosamine-1-phosphate N-acetyltransferase</fullName>
            <ecNumber evidence="1">2.3.1.157</ecNumber>
        </recommendedName>
    </domain>
</protein>
<accession>B0V9X1</accession>